<accession>B5FHE1</accession>
<keyword id="KW-0064">Aspartyl protease</keyword>
<keyword id="KW-0997">Cell inner membrane</keyword>
<keyword id="KW-1003">Cell membrane</keyword>
<keyword id="KW-0378">Hydrolase</keyword>
<keyword id="KW-0472">Membrane</keyword>
<keyword id="KW-0645">Protease</keyword>
<keyword id="KW-0812">Transmembrane</keyword>
<keyword id="KW-1133">Transmembrane helix</keyword>
<reference key="1">
    <citation type="journal article" date="2011" name="J. Bacteriol.">
        <title>Comparative genomics of 28 Salmonella enterica isolates: evidence for CRISPR-mediated adaptive sublineage evolution.</title>
        <authorList>
            <person name="Fricke W.F."/>
            <person name="Mammel M.K."/>
            <person name="McDermott P.F."/>
            <person name="Tartera C."/>
            <person name="White D.G."/>
            <person name="Leclerc J.E."/>
            <person name="Ravel J."/>
            <person name="Cebula T.A."/>
        </authorList>
    </citation>
    <scope>NUCLEOTIDE SEQUENCE [LARGE SCALE GENOMIC DNA]</scope>
    <source>
        <strain>CT_02021853</strain>
    </source>
</reference>
<gene>
    <name evidence="1" type="primary">lspA</name>
    <name type="ordered locus">SeD_A0051</name>
</gene>
<proteinExistence type="inferred from homology"/>
<dbReference type="EC" id="3.4.23.36" evidence="1"/>
<dbReference type="EMBL" id="CP001144">
    <property type="protein sequence ID" value="ACH77918.1"/>
    <property type="molecule type" value="Genomic_DNA"/>
</dbReference>
<dbReference type="RefSeq" id="WP_000042736.1">
    <property type="nucleotide sequence ID" value="NC_011205.1"/>
</dbReference>
<dbReference type="SMR" id="B5FHE1"/>
<dbReference type="MEROPS" id="A08.001"/>
<dbReference type="KEGG" id="sed:SeD_A0051"/>
<dbReference type="HOGENOM" id="CLU_083252_4_0_6"/>
<dbReference type="UniPathway" id="UPA00665"/>
<dbReference type="Proteomes" id="UP000008322">
    <property type="component" value="Chromosome"/>
</dbReference>
<dbReference type="GO" id="GO:0005886">
    <property type="term" value="C:plasma membrane"/>
    <property type="evidence" value="ECO:0007669"/>
    <property type="project" value="UniProtKB-SubCell"/>
</dbReference>
<dbReference type="GO" id="GO:0004190">
    <property type="term" value="F:aspartic-type endopeptidase activity"/>
    <property type="evidence" value="ECO:0007669"/>
    <property type="project" value="UniProtKB-UniRule"/>
</dbReference>
<dbReference type="GO" id="GO:0006508">
    <property type="term" value="P:proteolysis"/>
    <property type="evidence" value="ECO:0007669"/>
    <property type="project" value="UniProtKB-KW"/>
</dbReference>
<dbReference type="HAMAP" id="MF_00161">
    <property type="entry name" value="LspA"/>
    <property type="match status" value="1"/>
</dbReference>
<dbReference type="InterPro" id="IPR001872">
    <property type="entry name" value="Peptidase_A8"/>
</dbReference>
<dbReference type="NCBIfam" id="TIGR00077">
    <property type="entry name" value="lspA"/>
    <property type="match status" value="1"/>
</dbReference>
<dbReference type="PANTHER" id="PTHR33695">
    <property type="entry name" value="LIPOPROTEIN SIGNAL PEPTIDASE"/>
    <property type="match status" value="1"/>
</dbReference>
<dbReference type="PANTHER" id="PTHR33695:SF1">
    <property type="entry name" value="LIPOPROTEIN SIGNAL PEPTIDASE"/>
    <property type="match status" value="1"/>
</dbReference>
<dbReference type="Pfam" id="PF01252">
    <property type="entry name" value="Peptidase_A8"/>
    <property type="match status" value="1"/>
</dbReference>
<dbReference type="PRINTS" id="PR00781">
    <property type="entry name" value="LIPOSIGPTASE"/>
</dbReference>
<dbReference type="PROSITE" id="PS00855">
    <property type="entry name" value="SPASE_II"/>
    <property type="match status" value="1"/>
</dbReference>
<evidence type="ECO:0000255" key="1">
    <source>
        <dbReference type="HAMAP-Rule" id="MF_00161"/>
    </source>
</evidence>
<name>LSPA_SALDC</name>
<organism>
    <name type="scientific">Salmonella dublin (strain CT_02021853)</name>
    <dbReference type="NCBI Taxonomy" id="439851"/>
    <lineage>
        <taxon>Bacteria</taxon>
        <taxon>Pseudomonadati</taxon>
        <taxon>Pseudomonadota</taxon>
        <taxon>Gammaproteobacteria</taxon>
        <taxon>Enterobacterales</taxon>
        <taxon>Enterobacteriaceae</taxon>
        <taxon>Salmonella</taxon>
    </lineage>
</organism>
<comment type="function">
    <text evidence="1">This protein specifically catalyzes the removal of signal peptides from prolipoproteins.</text>
</comment>
<comment type="catalytic activity">
    <reaction evidence="1">
        <text>Release of signal peptides from bacterial membrane prolipoproteins. Hydrolyzes -Xaa-Yaa-Zaa-|-(S,diacylglyceryl)Cys-, in which Xaa is hydrophobic (preferably Leu), and Yaa (Ala or Ser) and Zaa (Gly or Ala) have small, neutral side chains.</text>
        <dbReference type="EC" id="3.4.23.36"/>
    </reaction>
</comment>
<comment type="pathway">
    <text evidence="1">Protein modification; lipoprotein biosynthesis (signal peptide cleavage).</text>
</comment>
<comment type="subcellular location">
    <subcellularLocation>
        <location evidence="1">Cell inner membrane</location>
        <topology evidence="1">Multi-pass membrane protein</topology>
    </subcellularLocation>
</comment>
<comment type="similarity">
    <text evidence="1">Belongs to the peptidase A8 family.</text>
</comment>
<protein>
    <recommendedName>
        <fullName evidence="1">Lipoprotein signal peptidase</fullName>
        <ecNumber evidence="1">3.4.23.36</ecNumber>
    </recommendedName>
    <alternativeName>
        <fullName evidence="1">Prolipoprotein signal peptidase</fullName>
    </alternativeName>
    <alternativeName>
        <fullName evidence="1">Signal peptidase II</fullName>
        <shortName evidence="1">SPase II</shortName>
    </alternativeName>
</protein>
<sequence length="166" mass="18340">MSKPLCSTGLRWLWLVVVVLIIDLGSKYLILQNFALGDTVGLFPSLNLHYARNYGAAFSFLADSGGWQRWFFAGIAIGICVILLVMMYRSKATQKLNNIAYALIIGGALGNLFDRLWHGFVVDMIDFYVGDWHFATFNLADSAICIGAALIVLEGFLPKPTAKEQA</sequence>
<feature type="chain" id="PRO_1000097274" description="Lipoprotein signal peptidase">
    <location>
        <begin position="1"/>
        <end position="166"/>
    </location>
</feature>
<feature type="transmembrane region" description="Helical" evidence="1">
    <location>
        <begin position="12"/>
        <end position="32"/>
    </location>
</feature>
<feature type="transmembrane region" description="Helical" evidence="1">
    <location>
        <begin position="70"/>
        <end position="90"/>
    </location>
</feature>
<feature type="transmembrane region" description="Helical" evidence="1">
    <location>
        <begin position="102"/>
        <end position="122"/>
    </location>
</feature>
<feature type="transmembrane region" description="Helical" evidence="1">
    <location>
        <begin position="137"/>
        <end position="157"/>
    </location>
</feature>
<feature type="active site" evidence="1">
    <location>
        <position position="123"/>
    </location>
</feature>
<feature type="active site" evidence="1">
    <location>
        <position position="141"/>
    </location>
</feature>